<keyword id="KW-0002">3D-structure</keyword>
<keyword id="KW-0007">Acetylation</keyword>
<keyword id="KW-0025">Alternative splicing</keyword>
<keyword id="KW-0175">Coiled coil</keyword>
<keyword id="KW-0903">Direct protein sequencing</keyword>
<keyword id="KW-1017">Isopeptide bond</keyword>
<keyword id="KW-0507">mRNA processing</keyword>
<keyword id="KW-0508">mRNA splicing</keyword>
<keyword id="KW-0539">Nucleus</keyword>
<keyword id="KW-0597">Phosphoprotein</keyword>
<keyword id="KW-1267">Proteomics identification</keyword>
<keyword id="KW-1185">Reference proteome</keyword>
<keyword id="KW-0687">Ribonucleoprotein</keyword>
<keyword id="KW-0694">RNA-binding</keyword>
<keyword id="KW-0747">Spliceosome</keyword>
<keyword id="KW-0804">Transcription</keyword>
<keyword id="KW-0805">Transcription regulation</keyword>
<keyword id="KW-0832">Ubl conjugation</keyword>
<evidence type="ECO:0000250" key="1">
    <source>
        <dbReference type="UniProtKB" id="Q64012"/>
    </source>
</evidence>
<evidence type="ECO:0000255" key="2"/>
<evidence type="ECO:0000255" key="3">
    <source>
        <dbReference type="PROSITE-ProRule" id="PRU00176"/>
    </source>
</evidence>
<evidence type="ECO:0000256" key="4">
    <source>
        <dbReference type="SAM" id="MobiDB-lite"/>
    </source>
</evidence>
<evidence type="ECO:0000269" key="5">
    <source>
    </source>
</evidence>
<evidence type="ECO:0000269" key="6">
    <source>
    </source>
</evidence>
<evidence type="ECO:0000269" key="7">
    <source>
    </source>
</evidence>
<evidence type="ECO:0000269" key="8">
    <source>
    </source>
</evidence>
<evidence type="ECO:0000269" key="9">
    <source ref="6"/>
</evidence>
<evidence type="ECO:0000303" key="10">
    <source>
    </source>
</evidence>
<evidence type="ECO:0000303" key="11">
    <source>
    </source>
</evidence>
<evidence type="ECO:0000305" key="12"/>
<evidence type="ECO:0007744" key="13">
    <source>
    </source>
</evidence>
<evidence type="ECO:0007744" key="14">
    <source>
    </source>
</evidence>
<evidence type="ECO:0007744" key="15">
    <source>
    </source>
</evidence>
<evidence type="ECO:0007744" key="16">
    <source>
    </source>
</evidence>
<evidence type="ECO:0007744" key="17">
    <source>
    </source>
</evidence>
<evidence type="ECO:0007744" key="18">
    <source>
    </source>
</evidence>
<evidence type="ECO:0007744" key="19">
    <source>
    </source>
</evidence>
<evidence type="ECO:0007744" key="20">
    <source>
    </source>
</evidence>
<evidence type="ECO:0007744" key="21">
    <source>
    </source>
</evidence>
<evidence type="ECO:0007744" key="22">
    <source>
    </source>
</evidence>
<evidence type="ECO:0007744" key="23">
    <source>
    </source>
</evidence>
<evidence type="ECO:0007744" key="24">
    <source>
    </source>
</evidence>
<evidence type="ECO:0007744" key="25">
    <source>
    </source>
</evidence>
<evidence type="ECO:0007744" key="26">
    <source>
    </source>
</evidence>
<evidence type="ECO:0007744" key="27">
    <source>
    </source>
</evidence>
<evidence type="ECO:0007829" key="28">
    <source>
        <dbReference type="PDB" id="1WF1"/>
    </source>
</evidence>
<gene>
    <name type="primary">RALY</name>
    <name type="synonym">HNRPCL2</name>
    <name type="synonym">P542</name>
</gene>
<accession>Q9UKM9</accession>
<accession>Q14621</accession>
<accession>Q2M365</accession>
<accession>Q5QPL8</accession>
<accession>Q9BQX6</accession>
<accession>Q9UJE3</accession>
<feature type="initiator methionine" description="Removed" evidence="22">
    <location>
        <position position="1"/>
    </location>
</feature>
<feature type="chain" id="PRO_0000081746" description="RNA-binding protein Raly">
    <location>
        <begin position="2"/>
        <end position="306"/>
    </location>
</feature>
<feature type="domain" description="RRM" evidence="3">
    <location>
        <begin position="21"/>
        <end position="92"/>
    </location>
</feature>
<feature type="region of interest" description="Disordered" evidence="4">
    <location>
        <begin position="215"/>
        <end position="306"/>
    </location>
</feature>
<feature type="region of interest" description="Epitope (recognized by BKRF1 antibodies)">
    <location>
        <begin position="227"/>
        <end position="253"/>
    </location>
</feature>
<feature type="coiled-coil region" evidence="2">
    <location>
        <begin position="183"/>
        <end position="216"/>
    </location>
</feature>
<feature type="compositionally biased region" description="Basic and acidic residues" evidence="4">
    <location>
        <begin position="217"/>
        <end position="226"/>
    </location>
</feature>
<feature type="compositionally biased region" description="Gly residues" evidence="4">
    <location>
        <begin position="227"/>
        <end position="252"/>
    </location>
</feature>
<feature type="compositionally biased region" description="Basic and acidic residues" evidence="4">
    <location>
        <begin position="287"/>
        <end position="297"/>
    </location>
</feature>
<feature type="modified residue" description="N-acetylserine" evidence="22">
    <location>
        <position position="2"/>
    </location>
</feature>
<feature type="modified residue" description="N6-acetyllysine" evidence="1">
    <location>
        <position position="44"/>
    </location>
</feature>
<feature type="modified residue" description="Phosphoserine" evidence="23">
    <location>
        <position position="63"/>
    </location>
</feature>
<feature type="modified residue" description="Phosphoserine" evidence="19">
    <location>
        <position position="106"/>
    </location>
</feature>
<feature type="modified residue" description="Phosphoserine" evidence="9 14 17 20 21 23 24">
    <location>
        <position position="135"/>
    </location>
</feature>
<feature type="modified residue" description="N6-acetyllysine; alternate" evidence="18">
    <location>
        <position position="165"/>
    </location>
</feature>
<feature type="modified residue" description="Phosphothreonine" evidence="1">
    <location>
        <position position="262"/>
    </location>
</feature>
<feature type="modified residue" description="Phosphoserine" evidence="1">
    <location>
        <position position="264"/>
    </location>
</feature>
<feature type="modified residue" description="Phosphothreonine" evidence="16 19 24">
    <location>
        <position position="286"/>
    </location>
</feature>
<feature type="modified residue" description="Phosphoserine" evidence="16 19 24">
    <location>
        <position position="288"/>
    </location>
</feature>
<feature type="modified residue" description="Phosphoserine" evidence="13 15 16 19">
    <location>
        <position position="295"/>
    </location>
</feature>
<feature type="modified residue" description="Phosphothreonine" evidence="15 16 19 24">
    <location>
        <position position="298"/>
    </location>
</feature>
<feature type="cross-link" description="Glycyl lysine isopeptide (Lys-Gly) (interchain with G-Cter in SUMO2)" evidence="25 26 27">
    <location>
        <position position="4"/>
    </location>
</feature>
<feature type="cross-link" description="Glycyl lysine isopeptide (Lys-Gly) (interchain with G-Cter in SUMO2)" evidence="27">
    <location>
        <position position="94"/>
    </location>
</feature>
<feature type="cross-link" description="Glycyl lysine isopeptide (Lys-Gly) (interchain with G-Cter in SUMO2)" evidence="27">
    <location>
        <position position="99"/>
    </location>
</feature>
<feature type="cross-link" description="Glycyl lysine isopeptide (Lys-Gly) (interchain with G-Cter in SUMO2)" evidence="25 26 27">
    <location>
        <position position="159"/>
    </location>
</feature>
<feature type="cross-link" description="Glycyl lysine isopeptide (Lys-Gly) (interchain with G-Cter in SUMO2); alternate" evidence="25 27">
    <location>
        <position position="165"/>
    </location>
</feature>
<feature type="cross-link" description="Glycyl lysine isopeptide (Lys-Gly) (interchain with G-Cter in SUMO2)" evidence="27">
    <location>
        <position position="179"/>
    </location>
</feature>
<feature type="cross-link" description="Glycyl lysine isopeptide (Lys-Gly) (interchain with G-Cter in SUMO2)" evidence="27">
    <location>
        <position position="191"/>
    </location>
</feature>
<feature type="splice variant" id="VSP_005804" description="In isoform 1." evidence="10 11">
    <location>
        <begin position="110"/>
        <end position="125"/>
    </location>
</feature>
<feature type="sequence variant" id="VAR_052215" description="In dbSNP:rs35191085.">
    <original>V</original>
    <variation>M</variation>
    <location>
        <position position="139"/>
    </location>
</feature>
<feature type="sequence variant" id="VAR_015223" description="In dbSNP:rs3180568.">
    <original>Q</original>
    <variation>R</variation>
    <location>
        <position position="215"/>
    </location>
</feature>
<feature type="sequence variant" id="VAR_015224" description="In dbSNP:rs2281209.">
    <original>G</original>
    <variation>S</variation>
    <location>
        <position position="251"/>
    </location>
</feature>
<feature type="sequence conflict" description="In Ref. 2; AAC28898." evidence="12" ref="2">
    <original>EQ</original>
    <variation>DE</variation>
    <location>
        <begin position="214"/>
        <end position="215"/>
    </location>
</feature>
<feature type="sequence conflict" description="In Ref. 2; AAC28898." evidence="12" ref="2">
    <original>A</original>
    <variation>AS</variation>
    <location>
        <position position="230"/>
    </location>
</feature>
<feature type="strand" evidence="28">
    <location>
        <begin position="20"/>
        <end position="25"/>
    </location>
</feature>
<feature type="helix" evidence="28">
    <location>
        <begin position="35"/>
        <end position="42"/>
    </location>
</feature>
<feature type="helix" evidence="28">
    <location>
        <begin position="43"/>
        <end position="45"/>
    </location>
</feature>
<feature type="strand" evidence="28">
    <location>
        <begin position="49"/>
        <end position="54"/>
    </location>
</feature>
<feature type="strand" evidence="28">
    <location>
        <begin position="57"/>
        <end position="61"/>
    </location>
</feature>
<feature type="strand" evidence="28">
    <location>
        <begin position="63"/>
        <end position="65"/>
    </location>
</feature>
<feature type="helix" evidence="28">
    <location>
        <begin position="66"/>
        <end position="75"/>
    </location>
</feature>
<feature type="strand" evidence="28">
    <location>
        <begin position="87"/>
        <end position="90"/>
    </location>
</feature>
<feature type="modified residue" description="Phosphoserine" evidence="21 24">
    <location sequence="Q9UKM9-2">
        <position position="106"/>
    </location>
</feature>
<protein>
    <recommendedName>
        <fullName>RNA-binding protein Raly</fullName>
    </recommendedName>
    <alternativeName>
        <fullName>Autoantigen p542</fullName>
    </alternativeName>
    <alternativeName>
        <fullName>Heterogeneous nuclear ribonucleoprotein C-like 2</fullName>
        <shortName>hnRNP core protein C-like 2</shortName>
    </alternativeName>
    <alternativeName>
        <fullName>hnRNP associated with lethal yellow protein homolog</fullName>
    </alternativeName>
</protein>
<proteinExistence type="evidence at protein level"/>
<comment type="function">
    <text evidence="1 8">RNA-binding protein that acts as a transcriptional cofactor for cholesterol biosynthetic genes in the liver. Binds the lipid-responsive non-coding RNA LeXis and is required for LeXis-mediated effect on cholesterogenesis (By similarity). May be a heterogeneous nuclear ribonucleoprotein (hnRNP) (PubMed:9376072).</text>
</comment>
<comment type="subunit">
    <text evidence="6 7">Identified in the spliceosome C complex (PubMed:11991638). Interacts (through its RNA-binding domain) with FUS (through its RNA-binding domain); both are components of the same RNPs (PubMed:30354839).</text>
</comment>
<comment type="interaction">
    <interactant intactId="EBI-714796">
        <id>Q9UKM9</id>
    </interactant>
    <interactant intactId="EBI-1038838">
        <id>Q13936</id>
        <label>CACNA1C</label>
    </interactant>
    <organismsDiffer>false</organismsDiffer>
    <experiments>2</experiments>
</comment>
<comment type="interaction">
    <interactant intactId="EBI-714796">
        <id>Q9UKM9</id>
    </interactant>
    <interactant intactId="EBI-400434">
        <id>P35637</id>
        <label>FUS</label>
    </interactant>
    <organismsDiffer>false</organismsDiffer>
    <experiments>6</experiments>
</comment>
<comment type="interaction">
    <interactant intactId="EBI-714796">
        <id>Q9UKM9</id>
    </interactant>
    <interactant intactId="EBI-357966">
        <id>P07910</id>
        <label>HNRNPC</label>
    </interactant>
    <organismsDiffer>false</organismsDiffer>
    <experiments>5</experiments>
</comment>
<comment type="interaction">
    <interactant intactId="EBI-714796">
        <id>Q9UKM9</id>
    </interactant>
    <interactant intactId="EBI-9512317">
        <id>B2RXH8</id>
        <label>HNRNPCL2</label>
    </interactant>
    <organismsDiffer>false</organismsDiffer>
    <experiments>2</experiments>
</comment>
<comment type="interaction">
    <interactant intactId="EBI-714796">
        <id>Q9UKM9</id>
    </interactant>
    <interactant intactId="EBI-1043236">
        <id>Q86UR5</id>
        <label>RIMS1</label>
    </interactant>
    <organismsDiffer>false</organismsDiffer>
    <experiments>2</experiments>
</comment>
<comment type="subcellular location">
    <subcellularLocation>
        <location evidence="1">Nucleus</location>
    </subcellularLocation>
</comment>
<comment type="alternative products">
    <event type="alternative splicing"/>
    <isoform>
        <id>Q9UKM9-1</id>
        <name>2</name>
        <sequence type="displayed"/>
    </isoform>
    <isoform>
        <id>Q9UKM9-2</id>
        <name>1</name>
        <sequence type="described" ref="VSP_005804"/>
    </isoform>
</comment>
<comment type="tissue specificity">
    <text evidence="5">Expressed in heart, brain, lung, liver, skeletal muscle, kidney and pancreas. Weakly expressed in placenta.</text>
</comment>
<comment type="miscellaneous">
    <text evidence="8">Autoantigen found in infectious mononucleosis caused by Epstein-Barr virus. An epitope recognized by B-cells, which cross-react with the BKRF1 protein (EBNA-1 nuclear protein) of Epstein-Barr virus has been identified.</text>
</comment>
<comment type="similarity">
    <text evidence="12">Belongs to the RRM HNRPC family. RALY subfamily.</text>
</comment>
<sequence length="306" mass="32463">MSLKLQASNVTNKNDPKSINSRVFIGNLNTALVKKSDVETIFSKYGRVAGCSVHKGYAFVQYSNERHARAAVLGENGRVLAGQTLDINMAGEPKPDRPKGLKRAASAIYSGYIFDYDYYRDDFYDRLFDYRGRLSPVPVPRAVPVKRPRVTVPLVRRVKTNVPVKLFARSTAVTTSSAKIKLKSSELQAIKTELTQIKSNIDALLSRLEQIAAEQKANPDGKKKGDGGGAGGGGGGGGSGGGGSGGGGGGGSSRPPAPQENTTSEAGLPQGEARTRDDGDEEGLLTHSEEELEHSQDTDADDGALQ</sequence>
<organism>
    <name type="scientific">Homo sapiens</name>
    <name type="common">Human</name>
    <dbReference type="NCBI Taxonomy" id="9606"/>
    <lineage>
        <taxon>Eukaryota</taxon>
        <taxon>Metazoa</taxon>
        <taxon>Chordata</taxon>
        <taxon>Craniata</taxon>
        <taxon>Vertebrata</taxon>
        <taxon>Euteleostomi</taxon>
        <taxon>Mammalia</taxon>
        <taxon>Eutheria</taxon>
        <taxon>Euarchontoglires</taxon>
        <taxon>Primates</taxon>
        <taxon>Haplorrhini</taxon>
        <taxon>Catarrhini</taxon>
        <taxon>Hominidae</taxon>
        <taxon>Homo</taxon>
    </lineage>
</organism>
<name>RALY_HUMAN</name>
<dbReference type="EMBL" id="AF148457">
    <property type="protein sequence ID" value="AAF04487.1"/>
    <property type="molecule type" value="mRNA"/>
</dbReference>
<dbReference type="EMBL" id="L38696">
    <property type="protein sequence ID" value="AAC28898.1"/>
    <property type="molecule type" value="mRNA"/>
</dbReference>
<dbReference type="EMBL" id="AL031668">
    <property type="status" value="NOT_ANNOTATED_CDS"/>
    <property type="molecule type" value="Genomic_DNA"/>
</dbReference>
<dbReference type="EMBL" id="BC105018">
    <property type="protein sequence ID" value="AAI05019.1"/>
    <property type="molecule type" value="mRNA"/>
</dbReference>
<dbReference type="CCDS" id="CCDS13229.1">
    <molecule id="Q9UKM9-2"/>
</dbReference>
<dbReference type="CCDS" id="CCDS13230.1">
    <molecule id="Q9UKM9-1"/>
</dbReference>
<dbReference type="RefSeq" id="NP_031393.2">
    <molecule id="Q9UKM9-2"/>
    <property type="nucleotide sequence ID" value="NM_007367.3"/>
</dbReference>
<dbReference type="RefSeq" id="NP_057951.1">
    <molecule id="Q9UKM9-1"/>
    <property type="nucleotide sequence ID" value="NM_016732.3"/>
</dbReference>
<dbReference type="RefSeq" id="XP_005260391.1">
    <molecule id="Q9UKM9-1"/>
    <property type="nucleotide sequence ID" value="XM_005260334.6"/>
</dbReference>
<dbReference type="RefSeq" id="XP_005260393.1">
    <molecule id="Q9UKM9-2"/>
    <property type="nucleotide sequence ID" value="XM_005260336.6"/>
</dbReference>
<dbReference type="RefSeq" id="XP_011526996.1">
    <property type="nucleotide sequence ID" value="XM_011528694.2"/>
</dbReference>
<dbReference type="RefSeq" id="XP_011526997.1">
    <molecule id="Q9UKM9-1"/>
    <property type="nucleotide sequence ID" value="XM_011528695.4"/>
</dbReference>
<dbReference type="RefSeq" id="XP_016883220.1">
    <molecule id="Q9UKM9-1"/>
    <property type="nucleotide sequence ID" value="XM_017027731.3"/>
</dbReference>
<dbReference type="RefSeq" id="XP_047295971.1">
    <molecule id="Q9UKM9-1"/>
    <property type="nucleotide sequence ID" value="XM_047440015.1"/>
</dbReference>
<dbReference type="RefSeq" id="XP_047295972.1">
    <molecule id="Q9UKM9-2"/>
    <property type="nucleotide sequence ID" value="XM_047440016.1"/>
</dbReference>
<dbReference type="PDB" id="1WF1">
    <property type="method" value="NMR"/>
    <property type="chains" value="A=1-97"/>
</dbReference>
<dbReference type="PDBsum" id="1WF1"/>
<dbReference type="BMRB" id="Q9UKM9"/>
<dbReference type="SMR" id="Q9UKM9"/>
<dbReference type="BioGRID" id="116575">
    <property type="interactions" value="403"/>
</dbReference>
<dbReference type="CORUM" id="Q9UKM9"/>
<dbReference type="FunCoup" id="Q9UKM9">
    <property type="interactions" value="3108"/>
</dbReference>
<dbReference type="IntAct" id="Q9UKM9">
    <property type="interactions" value="199"/>
</dbReference>
<dbReference type="MINT" id="Q9UKM9"/>
<dbReference type="STRING" id="9606.ENSP00000246194"/>
<dbReference type="GlyGen" id="Q9UKM9">
    <property type="glycosylation" value="2 sites, 1 O-linked glycan (1 site)"/>
</dbReference>
<dbReference type="iPTMnet" id="Q9UKM9"/>
<dbReference type="PhosphoSitePlus" id="Q9UKM9"/>
<dbReference type="SwissPalm" id="Q9UKM9"/>
<dbReference type="BioMuta" id="RALY"/>
<dbReference type="DMDM" id="25091115"/>
<dbReference type="CPTAC" id="CPTAC-264"/>
<dbReference type="CPTAC" id="CPTAC-265"/>
<dbReference type="jPOST" id="Q9UKM9"/>
<dbReference type="MassIVE" id="Q9UKM9"/>
<dbReference type="PaxDb" id="9606-ENSP00000246194"/>
<dbReference type="PeptideAtlas" id="Q9UKM9"/>
<dbReference type="ProteomicsDB" id="84821">
    <molecule id="Q9UKM9-1"/>
</dbReference>
<dbReference type="ProteomicsDB" id="84822">
    <molecule id="Q9UKM9-2"/>
</dbReference>
<dbReference type="Pumba" id="Q9UKM9"/>
<dbReference type="Antibodypedia" id="10794">
    <property type="antibodies" value="254 antibodies from 31 providers"/>
</dbReference>
<dbReference type="DNASU" id="22913"/>
<dbReference type="Ensembl" id="ENST00000246194.8">
    <molecule id="Q9UKM9-1"/>
    <property type="protein sequence ID" value="ENSP00000246194.3"/>
    <property type="gene ID" value="ENSG00000125970.12"/>
</dbReference>
<dbReference type="Ensembl" id="ENST00000375114.7">
    <molecule id="Q9UKM9-2"/>
    <property type="protein sequence ID" value="ENSP00000364255.3"/>
    <property type="gene ID" value="ENSG00000125970.12"/>
</dbReference>
<dbReference type="GeneID" id="22913"/>
<dbReference type="KEGG" id="hsa:22913"/>
<dbReference type="MANE-Select" id="ENST00000246194.8">
    <property type="protein sequence ID" value="ENSP00000246194.3"/>
    <property type="RefSeq nucleotide sequence ID" value="NM_016732.3"/>
    <property type="RefSeq protein sequence ID" value="NP_057951.1"/>
</dbReference>
<dbReference type="UCSC" id="uc002xab.4">
    <molecule id="Q9UKM9-1"/>
    <property type="organism name" value="human"/>
</dbReference>
<dbReference type="AGR" id="HGNC:15921"/>
<dbReference type="CTD" id="22913"/>
<dbReference type="DisGeNET" id="22913"/>
<dbReference type="GeneCards" id="RALY"/>
<dbReference type="HGNC" id="HGNC:15921">
    <property type="gene designation" value="RALY"/>
</dbReference>
<dbReference type="HPA" id="ENSG00000125970">
    <property type="expression patterns" value="Low tissue specificity"/>
</dbReference>
<dbReference type="MIM" id="614663">
    <property type="type" value="gene"/>
</dbReference>
<dbReference type="neXtProt" id="NX_Q9UKM9"/>
<dbReference type="OpenTargets" id="ENSG00000125970"/>
<dbReference type="PharmGKB" id="PA34201"/>
<dbReference type="VEuPathDB" id="HostDB:ENSG00000125970"/>
<dbReference type="eggNOG" id="KOG0118">
    <property type="taxonomic scope" value="Eukaryota"/>
</dbReference>
<dbReference type="GeneTree" id="ENSGT00940000157601"/>
<dbReference type="InParanoid" id="Q9UKM9"/>
<dbReference type="OMA" id="XLFDYRG"/>
<dbReference type="OrthoDB" id="6730379at2759"/>
<dbReference type="PAN-GO" id="Q9UKM9">
    <property type="GO annotations" value="2 GO annotations based on evolutionary models"/>
</dbReference>
<dbReference type="PhylomeDB" id="Q9UKM9"/>
<dbReference type="TreeFam" id="TF330974"/>
<dbReference type="PathwayCommons" id="Q9UKM9"/>
<dbReference type="SignaLink" id="Q9UKM9"/>
<dbReference type="SIGNOR" id="Q9UKM9"/>
<dbReference type="BioGRID-ORCS" id="22913">
    <property type="hits" value="9 hits in 1167 CRISPR screens"/>
</dbReference>
<dbReference type="ChiTaRS" id="RALY">
    <property type="organism name" value="human"/>
</dbReference>
<dbReference type="EvolutionaryTrace" id="Q9UKM9"/>
<dbReference type="GeneWiki" id="RALY"/>
<dbReference type="GenomeRNAi" id="22913"/>
<dbReference type="Pharos" id="Q9UKM9">
    <property type="development level" value="Tbio"/>
</dbReference>
<dbReference type="PRO" id="PR:Q9UKM9"/>
<dbReference type="Proteomes" id="UP000005640">
    <property type="component" value="Chromosome 20"/>
</dbReference>
<dbReference type="RNAct" id="Q9UKM9">
    <property type="molecule type" value="protein"/>
</dbReference>
<dbReference type="Bgee" id="ENSG00000125970">
    <property type="expression patterns" value="Expressed in ganglionic eminence and 210 other cell types or tissues"/>
</dbReference>
<dbReference type="ExpressionAtlas" id="Q9UKM9">
    <property type="expression patterns" value="baseline and differential"/>
</dbReference>
<dbReference type="GO" id="GO:0071013">
    <property type="term" value="C:catalytic step 2 spliceosome"/>
    <property type="evidence" value="ECO:0000314"/>
    <property type="project" value="UniProtKB"/>
</dbReference>
<dbReference type="GO" id="GO:0005634">
    <property type="term" value="C:nucleus"/>
    <property type="evidence" value="ECO:0000314"/>
    <property type="project" value="UniProtKB"/>
</dbReference>
<dbReference type="GO" id="GO:0003723">
    <property type="term" value="F:RNA binding"/>
    <property type="evidence" value="ECO:0007005"/>
    <property type="project" value="UniProtKB"/>
</dbReference>
<dbReference type="GO" id="GO:0003712">
    <property type="term" value="F:transcription coregulator activity"/>
    <property type="evidence" value="ECO:0000250"/>
    <property type="project" value="UniProtKB"/>
</dbReference>
<dbReference type="GO" id="GO:0042632">
    <property type="term" value="P:cholesterol homeostasis"/>
    <property type="evidence" value="ECO:0000250"/>
    <property type="project" value="UniProtKB"/>
</dbReference>
<dbReference type="GO" id="GO:0000398">
    <property type="term" value="P:mRNA splicing, via spliceosome"/>
    <property type="evidence" value="ECO:0000305"/>
    <property type="project" value="UniProtKB"/>
</dbReference>
<dbReference type="GO" id="GO:0000122">
    <property type="term" value="P:negative regulation of transcription by RNA polymerase II"/>
    <property type="evidence" value="ECO:0000250"/>
    <property type="project" value="UniProtKB"/>
</dbReference>
<dbReference type="CDD" id="cd12604">
    <property type="entry name" value="RRM_RALY"/>
    <property type="match status" value="1"/>
</dbReference>
<dbReference type="FunFam" id="3.30.70.330:FF:000019">
    <property type="entry name" value="heterogeneous nuclear ribonucleoproteins C1/C2 isoform X1"/>
    <property type="match status" value="1"/>
</dbReference>
<dbReference type="Gene3D" id="3.30.70.330">
    <property type="match status" value="1"/>
</dbReference>
<dbReference type="InterPro" id="IPR017347">
    <property type="entry name" value="hnRNP_C"/>
</dbReference>
<dbReference type="InterPro" id="IPR012677">
    <property type="entry name" value="Nucleotide-bd_a/b_plait_sf"/>
</dbReference>
<dbReference type="InterPro" id="IPR034502">
    <property type="entry name" value="RALY_RRM"/>
</dbReference>
<dbReference type="InterPro" id="IPR035979">
    <property type="entry name" value="RBD_domain_sf"/>
</dbReference>
<dbReference type="InterPro" id="IPR000504">
    <property type="entry name" value="RRM_dom"/>
</dbReference>
<dbReference type="InterPro" id="IPR051186">
    <property type="entry name" value="RRM_HNRPC/RALY_subfam"/>
</dbReference>
<dbReference type="PANTHER" id="PTHR13968">
    <property type="entry name" value="HETEROGENEOUS NUCLEAR RIBONUCLEOPROTEIN"/>
    <property type="match status" value="1"/>
</dbReference>
<dbReference type="PANTHER" id="PTHR13968:SF6">
    <property type="entry name" value="RNA-BINDING PROTEIN RALY"/>
    <property type="match status" value="1"/>
</dbReference>
<dbReference type="Pfam" id="PF00076">
    <property type="entry name" value="RRM_1"/>
    <property type="match status" value="1"/>
</dbReference>
<dbReference type="PIRSF" id="PIRSF037992">
    <property type="entry name" value="hnRNP-C_Raly"/>
    <property type="match status" value="1"/>
</dbReference>
<dbReference type="SMART" id="SM00360">
    <property type="entry name" value="RRM"/>
    <property type="match status" value="1"/>
</dbReference>
<dbReference type="SUPFAM" id="SSF54928">
    <property type="entry name" value="RNA-binding domain, RBD"/>
    <property type="match status" value="1"/>
</dbReference>
<dbReference type="PROSITE" id="PS50102">
    <property type="entry name" value="RRM"/>
    <property type="match status" value="1"/>
</dbReference>
<reference key="1">
    <citation type="journal article" date="1999" name="Biochim. Biophys. Acta">
        <title>Alternative processing of the human and mouse raly genes.</title>
        <authorList>
            <person name="Khrebtukova I."/>
            <person name="Kuklin A."/>
            <person name="Woychik R.P."/>
            <person name="Michaud E.J."/>
        </authorList>
    </citation>
    <scope>NUCLEOTIDE SEQUENCE [MRNA] (ISOFORM 2)</scope>
    <scope>TISSUE SPECIFICITY</scope>
    <source>
        <tissue>Testis</tissue>
    </source>
</reference>
<reference key="2">
    <citation type="journal article" date="1997" name="J. Autoimmun.">
        <title>The p542 gene encodes an autoantigen that cross-reacts with EBNA-1 of the Epstein Barr virus and which may be a heterogeneous nuclear ribonucleoprotein.</title>
        <authorList>
            <person name="Rhodes G.H."/>
            <person name="Valbracht J.R."/>
            <person name="Nguyen M.-D."/>
            <person name="Vaughan J.H."/>
        </authorList>
    </citation>
    <scope>NUCLEOTIDE SEQUENCE [MRNA] (ISOFORM 1)</scope>
    <scope>INVOLVEMENT IN AUTOIMMUNE DISEASE</scope>
    <scope>FUNCTION</scope>
    <source>
        <tissue>Lymphocyte</tissue>
    </source>
</reference>
<reference key="3">
    <citation type="submission" date="1998-07" db="EMBL/GenBank/DDBJ databases">
        <authorList>
            <person name="Vaughan J.H."/>
        </authorList>
    </citation>
    <scope>SEQUENCE REVISION</scope>
</reference>
<reference key="4">
    <citation type="journal article" date="2001" name="Nature">
        <title>The DNA sequence and comparative analysis of human chromosome 20.</title>
        <authorList>
            <person name="Deloukas P."/>
            <person name="Matthews L.H."/>
            <person name="Ashurst J.L."/>
            <person name="Burton J."/>
            <person name="Gilbert J.G.R."/>
            <person name="Jones M."/>
            <person name="Stavrides G."/>
            <person name="Almeida J.P."/>
            <person name="Babbage A.K."/>
            <person name="Bagguley C.L."/>
            <person name="Bailey J."/>
            <person name="Barlow K.F."/>
            <person name="Bates K.N."/>
            <person name="Beard L.M."/>
            <person name="Beare D.M."/>
            <person name="Beasley O.P."/>
            <person name="Bird C.P."/>
            <person name="Blakey S.E."/>
            <person name="Bridgeman A.M."/>
            <person name="Brown A.J."/>
            <person name="Buck D."/>
            <person name="Burrill W.D."/>
            <person name="Butler A.P."/>
            <person name="Carder C."/>
            <person name="Carter N.P."/>
            <person name="Chapman J.C."/>
            <person name="Clamp M."/>
            <person name="Clark G."/>
            <person name="Clark L.N."/>
            <person name="Clark S.Y."/>
            <person name="Clee C.M."/>
            <person name="Clegg S."/>
            <person name="Cobley V.E."/>
            <person name="Collier R.E."/>
            <person name="Connor R.E."/>
            <person name="Corby N.R."/>
            <person name="Coulson A."/>
            <person name="Coville G.J."/>
            <person name="Deadman R."/>
            <person name="Dhami P.D."/>
            <person name="Dunn M."/>
            <person name="Ellington A.G."/>
            <person name="Frankland J.A."/>
            <person name="Fraser A."/>
            <person name="French L."/>
            <person name="Garner P."/>
            <person name="Grafham D.V."/>
            <person name="Griffiths C."/>
            <person name="Griffiths M.N.D."/>
            <person name="Gwilliam R."/>
            <person name="Hall R.E."/>
            <person name="Hammond S."/>
            <person name="Harley J.L."/>
            <person name="Heath P.D."/>
            <person name="Ho S."/>
            <person name="Holden J.L."/>
            <person name="Howden P.J."/>
            <person name="Huckle E."/>
            <person name="Hunt A.R."/>
            <person name="Hunt S.E."/>
            <person name="Jekosch K."/>
            <person name="Johnson C.M."/>
            <person name="Johnson D."/>
            <person name="Kay M.P."/>
            <person name="Kimberley A.M."/>
            <person name="King A."/>
            <person name="Knights A."/>
            <person name="Laird G.K."/>
            <person name="Lawlor S."/>
            <person name="Lehvaeslaiho M.H."/>
            <person name="Leversha M.A."/>
            <person name="Lloyd C."/>
            <person name="Lloyd D.M."/>
            <person name="Lovell J.D."/>
            <person name="Marsh V.L."/>
            <person name="Martin S.L."/>
            <person name="McConnachie L.J."/>
            <person name="McLay K."/>
            <person name="McMurray A.A."/>
            <person name="Milne S.A."/>
            <person name="Mistry D."/>
            <person name="Moore M.J.F."/>
            <person name="Mullikin J.C."/>
            <person name="Nickerson T."/>
            <person name="Oliver K."/>
            <person name="Parker A."/>
            <person name="Patel R."/>
            <person name="Pearce T.A.V."/>
            <person name="Peck A.I."/>
            <person name="Phillimore B.J.C.T."/>
            <person name="Prathalingam S.R."/>
            <person name="Plumb R.W."/>
            <person name="Ramsay H."/>
            <person name="Rice C.M."/>
            <person name="Ross M.T."/>
            <person name="Scott C.E."/>
            <person name="Sehra H.K."/>
            <person name="Shownkeen R."/>
            <person name="Sims S."/>
            <person name="Skuce C.D."/>
            <person name="Smith M.L."/>
            <person name="Soderlund C."/>
            <person name="Steward C.A."/>
            <person name="Sulston J.E."/>
            <person name="Swann R.M."/>
            <person name="Sycamore N."/>
            <person name="Taylor R."/>
            <person name="Tee L."/>
            <person name="Thomas D.W."/>
            <person name="Thorpe A."/>
            <person name="Tracey A."/>
            <person name="Tromans A.C."/>
            <person name="Vaudin M."/>
            <person name="Wall M."/>
            <person name="Wallis J.M."/>
            <person name="Whitehead S.L."/>
            <person name="Whittaker P."/>
            <person name="Willey D.L."/>
            <person name="Williams L."/>
            <person name="Williams S.A."/>
            <person name="Wilming L."/>
            <person name="Wray P.W."/>
            <person name="Hubbard T."/>
            <person name="Durbin R.M."/>
            <person name="Bentley D.R."/>
            <person name="Beck S."/>
            <person name="Rogers J."/>
        </authorList>
    </citation>
    <scope>NUCLEOTIDE SEQUENCE [LARGE SCALE GENOMIC DNA]</scope>
</reference>
<reference key="5">
    <citation type="journal article" date="2004" name="Genome Res.">
        <title>The status, quality, and expansion of the NIH full-length cDNA project: the Mammalian Gene Collection (MGC).</title>
        <authorList>
            <consortium name="The MGC Project Team"/>
        </authorList>
    </citation>
    <scope>NUCLEOTIDE SEQUENCE [LARGE SCALE MRNA] (ISOFORM 1)</scope>
    <source>
        <tissue>Brain</tissue>
    </source>
</reference>
<reference key="6">
    <citation type="submission" date="2008-12" db="UniProtKB">
        <authorList>
            <person name="Bienvenut W.V."/>
            <person name="Lilla S."/>
            <person name="von Kriegsheim A."/>
            <person name="Lempens A."/>
            <person name="Kolch W."/>
        </authorList>
    </citation>
    <scope>PROTEIN SEQUENCE OF 23-44; 56-66; 79-99; 121-126; 132-141 AND 184-216</scope>
    <scope>PHOSPHORYLATION AT SER-135</scope>
    <scope>IDENTIFICATION BY MASS SPECTROMETRY</scope>
    <source>
        <tissue>Ovarian carcinoma</tissue>
    </source>
</reference>
<reference key="7">
    <citation type="journal article" date="1995" name="J. Clin. Invest.">
        <title>Epstein-Barr virus-induced autoimmune responses. I. Immunoglobulin M autoantibodies to proteins mimicking and not mimicking Epstein-Barr virus nuclear antigen-1.</title>
        <authorList>
            <person name="Vaughan J.H."/>
            <person name="Valbracht J.R."/>
            <person name="Nguyen M.-D."/>
            <person name="Handley H.H."/>
            <person name="Smith R.S."/>
            <person name="Patrick K."/>
            <person name="Rhodes G.H."/>
        </authorList>
    </citation>
    <scope>PROTEIN SEQUENCE OF 227-253</scope>
    <scope>AUTOANTIGENIC EPITOPE MAPPING</scope>
</reference>
<reference key="8">
    <citation type="journal article" date="2002" name="RNA">
        <title>Purification and characterization of native spliceosomes suitable for three-dimensional structural analysis.</title>
        <authorList>
            <person name="Jurica M.S."/>
            <person name="Licklider L.J."/>
            <person name="Gygi S.P."/>
            <person name="Grigorieff N."/>
            <person name="Moore M.J."/>
        </authorList>
    </citation>
    <scope>IDENTIFICATION BY MASS SPECTROMETRY</scope>
    <scope>IDENTIFICATION IN THE SPLICEOSOMAL C COMPLEX</scope>
</reference>
<reference key="9">
    <citation type="journal article" date="2006" name="Cell">
        <title>Global, in vivo, and site-specific phosphorylation dynamics in signaling networks.</title>
        <authorList>
            <person name="Olsen J.V."/>
            <person name="Blagoev B."/>
            <person name="Gnad F."/>
            <person name="Macek B."/>
            <person name="Kumar C."/>
            <person name="Mortensen P."/>
            <person name="Mann M."/>
        </authorList>
    </citation>
    <scope>PHOSPHORYLATION [LARGE SCALE ANALYSIS] AT SER-135</scope>
    <scope>IDENTIFICATION BY MASS SPECTROMETRY [LARGE SCALE ANALYSIS]</scope>
    <source>
        <tissue>Cervix carcinoma</tissue>
    </source>
</reference>
<reference key="10">
    <citation type="journal article" date="2006" name="Pituitary">
        <title>Phosphoproteomic analysis of the human pituitary.</title>
        <authorList>
            <person name="Beranova-Giorgianni S."/>
            <person name="Zhao Y."/>
            <person name="Desiderio D.M."/>
            <person name="Giorgianni F."/>
        </authorList>
    </citation>
    <scope>PHOSPHORYLATION [LARGE SCALE ANALYSIS] AT SER-295</scope>
    <scope>IDENTIFICATION BY MASS SPECTROMETRY [LARGE SCALE ANALYSIS]</scope>
    <source>
        <tissue>Pituitary</tissue>
    </source>
</reference>
<reference key="11">
    <citation type="journal article" date="2007" name="Electrophoresis">
        <title>Toward a global characterization of the phosphoproteome in prostate cancer cells: identification of phosphoproteins in the LNCaP cell line.</title>
        <authorList>
            <person name="Giorgianni F."/>
            <person name="Zhao Y."/>
            <person name="Desiderio D.M."/>
            <person name="Beranova-Giorgianni S."/>
        </authorList>
    </citation>
    <scope>IDENTIFICATION BY MASS SPECTROMETRY [LARGE SCALE ANALYSIS]</scope>
    <source>
        <tissue>Prostate cancer</tissue>
    </source>
</reference>
<reference key="12">
    <citation type="journal article" date="2007" name="Science">
        <title>ATM and ATR substrate analysis reveals extensive protein networks responsive to DNA damage.</title>
        <authorList>
            <person name="Matsuoka S."/>
            <person name="Ballif B.A."/>
            <person name="Smogorzewska A."/>
            <person name="McDonald E.R. III"/>
            <person name="Hurov K.E."/>
            <person name="Luo J."/>
            <person name="Bakalarski C.E."/>
            <person name="Zhao Z."/>
            <person name="Solimini N."/>
            <person name="Lerenthal Y."/>
            <person name="Shiloh Y."/>
            <person name="Gygi S.P."/>
            <person name="Elledge S.J."/>
        </authorList>
    </citation>
    <scope>PHOSPHORYLATION [LARGE SCALE ANALYSIS] AT SER-295 AND THR-298</scope>
    <scope>IDENTIFICATION BY MASS SPECTROMETRY [LARGE SCALE ANALYSIS]</scope>
    <source>
        <tissue>Embryonic kidney</tissue>
    </source>
</reference>
<reference key="13">
    <citation type="journal article" date="2008" name="Mol. Cell">
        <title>Kinase-selective enrichment enables quantitative phosphoproteomics of the kinome across the cell cycle.</title>
        <authorList>
            <person name="Daub H."/>
            <person name="Olsen J.V."/>
            <person name="Bairlein M."/>
            <person name="Gnad F."/>
            <person name="Oppermann F.S."/>
            <person name="Korner R."/>
            <person name="Greff Z."/>
            <person name="Keri G."/>
            <person name="Stemmann O."/>
            <person name="Mann M."/>
        </authorList>
    </citation>
    <scope>PHOSPHORYLATION [LARGE SCALE ANALYSIS] AT SER-135</scope>
    <scope>IDENTIFICATION BY MASS SPECTROMETRY [LARGE SCALE ANALYSIS]</scope>
    <source>
        <tissue>Cervix carcinoma</tissue>
    </source>
</reference>
<reference key="14">
    <citation type="journal article" date="2008" name="Proc. Natl. Acad. Sci. U.S.A.">
        <title>A quantitative atlas of mitotic phosphorylation.</title>
        <authorList>
            <person name="Dephoure N."/>
            <person name="Zhou C."/>
            <person name="Villen J."/>
            <person name="Beausoleil S.A."/>
            <person name="Bakalarski C.E."/>
            <person name="Elledge S.J."/>
            <person name="Gygi S.P."/>
        </authorList>
    </citation>
    <scope>PHOSPHORYLATION [LARGE SCALE ANALYSIS] AT THR-286; SER-288; SER-295 AND THR-298</scope>
    <scope>IDENTIFICATION BY MASS SPECTROMETRY [LARGE SCALE ANALYSIS]</scope>
    <source>
        <tissue>Cervix carcinoma</tissue>
    </source>
</reference>
<reference key="15">
    <citation type="journal article" date="2009" name="Anal. Chem.">
        <title>Lys-N and trypsin cover complementary parts of the phosphoproteome in a refined SCX-based approach.</title>
        <authorList>
            <person name="Gauci S."/>
            <person name="Helbig A.O."/>
            <person name="Slijper M."/>
            <person name="Krijgsveld J."/>
            <person name="Heck A.J."/>
            <person name="Mohammed S."/>
        </authorList>
    </citation>
    <scope>IDENTIFICATION BY MASS SPECTROMETRY [LARGE SCALE ANALYSIS]</scope>
</reference>
<reference key="16">
    <citation type="journal article" date="2009" name="Sci. Signal.">
        <title>Quantitative phosphoproteomic analysis of T cell receptor signaling reveals system-wide modulation of protein-protein interactions.</title>
        <authorList>
            <person name="Mayya V."/>
            <person name="Lundgren D.H."/>
            <person name="Hwang S.-I."/>
            <person name="Rezaul K."/>
            <person name="Wu L."/>
            <person name="Eng J.K."/>
            <person name="Rodionov V."/>
            <person name="Han D.K."/>
        </authorList>
    </citation>
    <scope>PHOSPHORYLATION [LARGE SCALE ANALYSIS] AT SER-106; THR-286; SER-288; SER-295 AND THR-298</scope>
    <scope>IDENTIFICATION BY MASS SPECTROMETRY [LARGE SCALE ANALYSIS]</scope>
    <source>
        <tissue>Leukemic T-cell</tissue>
    </source>
</reference>
<reference key="17">
    <citation type="journal article" date="2009" name="Science">
        <title>Lysine acetylation targets protein complexes and co-regulates major cellular functions.</title>
        <authorList>
            <person name="Choudhary C."/>
            <person name="Kumar C."/>
            <person name="Gnad F."/>
            <person name="Nielsen M.L."/>
            <person name="Rehman M."/>
            <person name="Walther T.C."/>
            <person name="Olsen J.V."/>
            <person name="Mann M."/>
        </authorList>
    </citation>
    <scope>ACETYLATION [LARGE SCALE ANALYSIS] AT LYS-165</scope>
    <scope>IDENTIFICATION BY MASS SPECTROMETRY [LARGE SCALE ANALYSIS]</scope>
</reference>
<reference key="18">
    <citation type="journal article" date="2010" name="Sci. Signal.">
        <title>Quantitative phosphoproteomics reveals widespread full phosphorylation site occupancy during mitosis.</title>
        <authorList>
            <person name="Olsen J.V."/>
            <person name="Vermeulen M."/>
            <person name="Santamaria A."/>
            <person name="Kumar C."/>
            <person name="Miller M.L."/>
            <person name="Jensen L.J."/>
            <person name="Gnad F."/>
            <person name="Cox J."/>
            <person name="Jensen T.S."/>
            <person name="Nigg E.A."/>
            <person name="Brunak S."/>
            <person name="Mann M."/>
        </authorList>
    </citation>
    <scope>PHOSPHORYLATION [LARGE SCALE ANALYSIS] AT SER-135</scope>
    <scope>IDENTIFICATION BY MASS SPECTROMETRY [LARGE SCALE ANALYSIS]</scope>
    <source>
        <tissue>Cervix carcinoma</tissue>
    </source>
</reference>
<reference key="19">
    <citation type="journal article" date="2011" name="BMC Syst. Biol.">
        <title>Initial characterization of the human central proteome.</title>
        <authorList>
            <person name="Burkard T.R."/>
            <person name="Planyavsky M."/>
            <person name="Kaupe I."/>
            <person name="Breitwieser F.P."/>
            <person name="Buerckstuemmer T."/>
            <person name="Bennett K.L."/>
            <person name="Superti-Furga G."/>
            <person name="Colinge J."/>
        </authorList>
    </citation>
    <scope>IDENTIFICATION BY MASS SPECTROMETRY [LARGE SCALE ANALYSIS]</scope>
</reference>
<reference key="20">
    <citation type="journal article" date="2011" name="Sci. Signal.">
        <title>System-wide temporal characterization of the proteome and phosphoproteome of human embryonic stem cell differentiation.</title>
        <authorList>
            <person name="Rigbolt K.T."/>
            <person name="Prokhorova T.A."/>
            <person name="Akimov V."/>
            <person name="Henningsen J."/>
            <person name="Johansen P.T."/>
            <person name="Kratchmarova I."/>
            <person name="Kassem M."/>
            <person name="Mann M."/>
            <person name="Olsen J.V."/>
            <person name="Blagoev B."/>
        </authorList>
    </citation>
    <scope>PHOSPHORYLATION [LARGE SCALE ANALYSIS] AT SER-135</scope>
    <scope>PHOSPHORYLATION [LARGE SCALE ANALYSIS] AT SER-106 (ISOFORM 1)</scope>
    <scope>IDENTIFICATION BY MASS SPECTROMETRY [LARGE SCALE ANALYSIS]</scope>
</reference>
<reference key="21">
    <citation type="journal article" date="2012" name="Proc. Natl. Acad. Sci. U.S.A.">
        <title>N-terminal acetylome analyses and functional insights of the N-terminal acetyltransferase NatB.</title>
        <authorList>
            <person name="Van Damme P."/>
            <person name="Lasa M."/>
            <person name="Polevoda B."/>
            <person name="Gazquez C."/>
            <person name="Elosegui-Artola A."/>
            <person name="Kim D.S."/>
            <person name="De Juan-Pardo E."/>
            <person name="Demeyer K."/>
            <person name="Hole K."/>
            <person name="Larrea E."/>
            <person name="Timmerman E."/>
            <person name="Prieto J."/>
            <person name="Arnesen T."/>
            <person name="Sherman F."/>
            <person name="Gevaert K."/>
            <person name="Aldabe R."/>
        </authorList>
    </citation>
    <scope>ACETYLATION [LARGE SCALE ANALYSIS] AT SER-2</scope>
    <scope>CLEAVAGE OF INITIATOR METHIONINE [LARGE SCALE ANALYSIS]</scope>
    <scope>IDENTIFICATION BY MASS SPECTROMETRY [LARGE SCALE ANALYSIS]</scope>
</reference>
<reference key="22">
    <citation type="journal article" date="2013" name="J. Proteome Res.">
        <title>Toward a comprehensive characterization of a human cancer cell phosphoproteome.</title>
        <authorList>
            <person name="Zhou H."/>
            <person name="Di Palma S."/>
            <person name="Preisinger C."/>
            <person name="Peng M."/>
            <person name="Polat A.N."/>
            <person name="Heck A.J."/>
            <person name="Mohammed S."/>
        </authorList>
    </citation>
    <scope>PHOSPHORYLATION [LARGE SCALE ANALYSIS] AT SER-63 AND SER-135</scope>
    <scope>IDENTIFICATION BY MASS SPECTROMETRY [LARGE SCALE ANALYSIS]</scope>
    <source>
        <tissue>Cervix carcinoma</tissue>
        <tissue>Erythroleukemia</tissue>
    </source>
</reference>
<reference key="23">
    <citation type="journal article" date="2014" name="J. Proteomics">
        <title>An enzyme assisted RP-RPLC approach for in-depth analysis of human liver phosphoproteome.</title>
        <authorList>
            <person name="Bian Y."/>
            <person name="Song C."/>
            <person name="Cheng K."/>
            <person name="Dong M."/>
            <person name="Wang F."/>
            <person name="Huang J."/>
            <person name="Sun D."/>
            <person name="Wang L."/>
            <person name="Ye M."/>
            <person name="Zou H."/>
        </authorList>
    </citation>
    <scope>PHOSPHORYLATION [LARGE SCALE ANALYSIS] AT SER-135; THR-286; SER-288 AND THR-298</scope>
    <scope>PHOSPHORYLATION [LARGE SCALE ANALYSIS] AT SER-106 (ISOFORM 1)</scope>
    <scope>IDENTIFICATION BY MASS SPECTROMETRY [LARGE SCALE ANALYSIS]</scope>
    <source>
        <tissue>Liver</tissue>
    </source>
</reference>
<reference key="24">
    <citation type="journal article" date="2014" name="Nat. Struct. Mol. Biol.">
        <title>Uncovering global SUMOylation signaling networks in a site-specific manner.</title>
        <authorList>
            <person name="Hendriks I.A."/>
            <person name="D'Souza R.C."/>
            <person name="Yang B."/>
            <person name="Verlaan-de Vries M."/>
            <person name="Mann M."/>
            <person name="Vertegaal A.C."/>
        </authorList>
    </citation>
    <scope>SUMOYLATION [LARGE SCALE ANALYSIS] AT LYS-4; LYS-159 AND LYS-165</scope>
    <scope>IDENTIFICATION BY MASS SPECTROMETRY [LARGE SCALE ANALYSIS]</scope>
</reference>
<reference key="25">
    <citation type="journal article" date="2015" name="Mol. Cell. Proteomics">
        <title>System-wide analysis of SUMOylation dynamics in response to replication stress reveals novel small ubiquitin-like modified target proteins and acceptor lysines relevant for genome stability.</title>
        <authorList>
            <person name="Xiao Z."/>
            <person name="Chang J.G."/>
            <person name="Hendriks I.A."/>
            <person name="Sigurdsson J.O."/>
            <person name="Olsen J.V."/>
            <person name="Vertegaal A.C."/>
        </authorList>
    </citation>
    <scope>SUMOYLATION [LARGE SCALE ANALYSIS] AT LYS-4 AND LYS-159</scope>
    <scope>IDENTIFICATION BY MASS SPECTROMETRY [LARGE SCALE ANALYSIS]</scope>
</reference>
<reference key="26">
    <citation type="journal article" date="2017" name="Nat. Struct. Mol. Biol.">
        <title>Site-specific mapping of the human SUMO proteome reveals co-modification with phosphorylation.</title>
        <authorList>
            <person name="Hendriks I.A."/>
            <person name="Lyon D."/>
            <person name="Young C."/>
            <person name="Jensen L.J."/>
            <person name="Vertegaal A.C."/>
            <person name="Nielsen M.L."/>
        </authorList>
    </citation>
    <scope>SUMOYLATION [LARGE SCALE ANALYSIS] AT LYS-4; LYS-94; LYS-99; LYS-159; LYS-165; LYS-179 AND LYS-191</scope>
    <scope>IDENTIFICATION BY MASS SPECTROMETRY [LARGE SCALE ANALYSIS]</scope>
</reference>
<reference key="27">
    <citation type="journal article" date="2018" name="Mol. Biol. Cell">
        <title>The hnRNP raly regulates PRMT1 expression and interacts with the ALS-linked protein FUS: implication for reciprocal cellular localization.</title>
        <authorList>
            <person name="Gasperini L."/>
            <person name="Rossi A."/>
            <person name="Cornella N."/>
            <person name="Peroni D."/>
            <person name="Zuccotti P."/>
            <person name="Potrich V."/>
            <person name="Quattrone A."/>
            <person name="Macchi P."/>
        </authorList>
    </citation>
    <scope>INTERACTION WITH FUS</scope>
</reference>
<reference key="28">
    <citation type="submission" date="2004-11" db="PDB data bank">
        <title>Solution structure of RRM domain in RNA-binding protein NP_057951.</title>
        <authorList>
            <consortium name="RIKEN structural genomics initiative (RSGI)"/>
        </authorList>
    </citation>
    <scope>STRUCTURE BY NMR OF 1-97</scope>
</reference>